<comment type="function">
    <text evidence="1">Participates in chromosomal partition during cell division. May act via the formation of a condensin-like complex containing Smc and ScpB that pull DNA away from mid-cell into both cell halves.</text>
</comment>
<comment type="subunit">
    <text evidence="1">Component of a cohesin-like complex composed of ScpA, ScpB and the Smc homodimer, in which ScpA and ScpB bind to the head domain of Smc. The presence of the three proteins is required for the association of the complex with DNA.</text>
</comment>
<comment type="subcellular location">
    <subcellularLocation>
        <location evidence="1">Cytoplasm</location>
    </subcellularLocation>
    <text evidence="1">Associated with two foci at the outer edges of the nucleoid region in young cells, and at four foci within both cell halves in older cells.</text>
</comment>
<comment type="similarity">
    <text evidence="1">Belongs to the ScpA family.</text>
</comment>
<comment type="sequence caution" evidence="2">
    <conflict type="erroneous initiation">
        <sequence resource="EMBL-CDS" id="AAF85250"/>
    </conflict>
</comment>
<protein>
    <recommendedName>
        <fullName evidence="1">Segregation and condensation protein A</fullName>
    </recommendedName>
</protein>
<gene>
    <name evidence="1" type="primary">scpA</name>
    <name type="ordered locus">XF_2451</name>
</gene>
<sequence length="302" mass="33986">MNSERAQVANPPTQTPVPQQQEIPLAMVHGQPVLQIPQDLYIPPDALEVILDAFEGPLDLLLYLIRRQNLNILDIPVAEITRQYVDYINVMQELRFELAAEYLVMAAILAEIKSRMLLPRPPNIENEEGEDPRAELVRRLQEYERFKQAAEDLDALPRLDRDNSAAHAFVADQTTVRIPPPVNMKELLLALQDVLKRAELFSGHAIRREALSVRQRMGDILAHLEDGKFHPFTTLFTAEEGKLGVLVTFLAILELAKEQLLDIVQEASLGPIYIKSLAIHHTNGPLQLSSDFDNSPSTHAPP</sequence>
<accession>Q9PAP4</accession>
<name>SCPA_XYLFA</name>
<feature type="chain" id="PRO_0000306405" description="Segregation and condensation protein A">
    <location>
        <begin position="1"/>
        <end position="302"/>
    </location>
</feature>
<dbReference type="EMBL" id="AE003849">
    <property type="protein sequence ID" value="AAF85250.1"/>
    <property type="status" value="ALT_INIT"/>
    <property type="molecule type" value="Genomic_DNA"/>
</dbReference>
<dbReference type="PIR" id="G82554">
    <property type="entry name" value="G82554"/>
</dbReference>
<dbReference type="RefSeq" id="WP_010894895.1">
    <property type="nucleotide sequence ID" value="NC_002488.3"/>
</dbReference>
<dbReference type="SMR" id="Q9PAP4"/>
<dbReference type="STRING" id="160492.XF_2451"/>
<dbReference type="KEGG" id="xfa:XF_2451"/>
<dbReference type="eggNOG" id="COG1354">
    <property type="taxonomic scope" value="Bacteria"/>
</dbReference>
<dbReference type="HOGENOM" id="CLU_038686_0_1_6"/>
<dbReference type="Proteomes" id="UP000000812">
    <property type="component" value="Chromosome"/>
</dbReference>
<dbReference type="GO" id="GO:0005737">
    <property type="term" value="C:cytoplasm"/>
    <property type="evidence" value="ECO:0007669"/>
    <property type="project" value="UniProtKB-SubCell"/>
</dbReference>
<dbReference type="GO" id="GO:0051301">
    <property type="term" value="P:cell division"/>
    <property type="evidence" value="ECO:0007669"/>
    <property type="project" value="UniProtKB-KW"/>
</dbReference>
<dbReference type="GO" id="GO:0007059">
    <property type="term" value="P:chromosome segregation"/>
    <property type="evidence" value="ECO:0007669"/>
    <property type="project" value="UniProtKB-UniRule"/>
</dbReference>
<dbReference type="GO" id="GO:0006260">
    <property type="term" value="P:DNA replication"/>
    <property type="evidence" value="ECO:0007669"/>
    <property type="project" value="UniProtKB-UniRule"/>
</dbReference>
<dbReference type="Gene3D" id="6.10.250.2410">
    <property type="match status" value="1"/>
</dbReference>
<dbReference type="Gene3D" id="1.10.10.580">
    <property type="entry name" value="Structural maintenance of chromosome 1. Chain E"/>
    <property type="match status" value="1"/>
</dbReference>
<dbReference type="HAMAP" id="MF_01805">
    <property type="entry name" value="ScpA"/>
    <property type="match status" value="1"/>
</dbReference>
<dbReference type="InterPro" id="IPR003768">
    <property type="entry name" value="ScpA"/>
</dbReference>
<dbReference type="InterPro" id="IPR023093">
    <property type="entry name" value="ScpA-like_C"/>
</dbReference>
<dbReference type="PANTHER" id="PTHR33969">
    <property type="entry name" value="SEGREGATION AND CONDENSATION PROTEIN A"/>
    <property type="match status" value="1"/>
</dbReference>
<dbReference type="PANTHER" id="PTHR33969:SF2">
    <property type="entry name" value="SEGREGATION AND CONDENSATION PROTEIN A"/>
    <property type="match status" value="1"/>
</dbReference>
<dbReference type="Pfam" id="PF02616">
    <property type="entry name" value="SMC_ScpA"/>
    <property type="match status" value="1"/>
</dbReference>
<organism>
    <name type="scientific">Xylella fastidiosa (strain 9a5c)</name>
    <dbReference type="NCBI Taxonomy" id="160492"/>
    <lineage>
        <taxon>Bacteria</taxon>
        <taxon>Pseudomonadati</taxon>
        <taxon>Pseudomonadota</taxon>
        <taxon>Gammaproteobacteria</taxon>
        <taxon>Lysobacterales</taxon>
        <taxon>Lysobacteraceae</taxon>
        <taxon>Xylella</taxon>
    </lineage>
</organism>
<keyword id="KW-0131">Cell cycle</keyword>
<keyword id="KW-0132">Cell division</keyword>
<keyword id="KW-0159">Chromosome partition</keyword>
<keyword id="KW-0963">Cytoplasm</keyword>
<reference key="1">
    <citation type="journal article" date="2000" name="Nature">
        <title>The genome sequence of the plant pathogen Xylella fastidiosa.</title>
        <authorList>
            <person name="Simpson A.J.G."/>
            <person name="Reinach F.C."/>
            <person name="Arruda P."/>
            <person name="Abreu F.A."/>
            <person name="Acencio M."/>
            <person name="Alvarenga R."/>
            <person name="Alves L.M.C."/>
            <person name="Araya J.E."/>
            <person name="Baia G.S."/>
            <person name="Baptista C.S."/>
            <person name="Barros M.H."/>
            <person name="Bonaccorsi E.D."/>
            <person name="Bordin S."/>
            <person name="Bove J.M."/>
            <person name="Briones M.R.S."/>
            <person name="Bueno M.R.P."/>
            <person name="Camargo A.A."/>
            <person name="Camargo L.E.A."/>
            <person name="Carraro D.M."/>
            <person name="Carrer H."/>
            <person name="Colauto N.B."/>
            <person name="Colombo C."/>
            <person name="Costa F.F."/>
            <person name="Costa M.C.R."/>
            <person name="Costa-Neto C.M."/>
            <person name="Coutinho L.L."/>
            <person name="Cristofani M."/>
            <person name="Dias-Neto E."/>
            <person name="Docena C."/>
            <person name="El-Dorry H."/>
            <person name="Facincani A.P."/>
            <person name="Ferreira A.J.S."/>
            <person name="Ferreira V.C.A."/>
            <person name="Ferro J.A."/>
            <person name="Fraga J.S."/>
            <person name="Franca S.C."/>
            <person name="Franco M.C."/>
            <person name="Frohme M."/>
            <person name="Furlan L.R."/>
            <person name="Garnier M."/>
            <person name="Goldman G.H."/>
            <person name="Goldman M.H.S."/>
            <person name="Gomes S.L."/>
            <person name="Gruber A."/>
            <person name="Ho P.L."/>
            <person name="Hoheisel J.D."/>
            <person name="Junqueira M.L."/>
            <person name="Kemper E.L."/>
            <person name="Kitajima J.P."/>
            <person name="Krieger J.E."/>
            <person name="Kuramae E.E."/>
            <person name="Laigret F."/>
            <person name="Lambais M.R."/>
            <person name="Leite L.C.C."/>
            <person name="Lemos E.G.M."/>
            <person name="Lemos M.V.F."/>
            <person name="Lopes S.A."/>
            <person name="Lopes C.R."/>
            <person name="Machado J.A."/>
            <person name="Machado M.A."/>
            <person name="Madeira A.M.B.N."/>
            <person name="Madeira H.M.F."/>
            <person name="Marino C.L."/>
            <person name="Marques M.V."/>
            <person name="Martins E.A.L."/>
            <person name="Martins E.M.F."/>
            <person name="Matsukuma A.Y."/>
            <person name="Menck C.F.M."/>
            <person name="Miracca E.C."/>
            <person name="Miyaki C.Y."/>
            <person name="Monteiro-Vitorello C.B."/>
            <person name="Moon D.H."/>
            <person name="Nagai M.A."/>
            <person name="Nascimento A.L.T.O."/>
            <person name="Netto L.E.S."/>
            <person name="Nhani A. Jr."/>
            <person name="Nobrega F.G."/>
            <person name="Nunes L.R."/>
            <person name="Oliveira M.A."/>
            <person name="de Oliveira M.C."/>
            <person name="de Oliveira R.C."/>
            <person name="Palmieri D.A."/>
            <person name="Paris A."/>
            <person name="Peixoto B.R."/>
            <person name="Pereira G.A.G."/>
            <person name="Pereira H.A. Jr."/>
            <person name="Pesquero J.B."/>
            <person name="Quaggio R.B."/>
            <person name="Roberto P.G."/>
            <person name="Rodrigues V."/>
            <person name="de Rosa A.J.M."/>
            <person name="de Rosa V.E. Jr."/>
            <person name="de Sa R.G."/>
            <person name="Santelli R.V."/>
            <person name="Sawasaki H.E."/>
            <person name="da Silva A.C.R."/>
            <person name="da Silva A.M."/>
            <person name="da Silva F.R."/>
            <person name="Silva W.A. Jr."/>
            <person name="da Silveira J.F."/>
            <person name="Silvestri M.L.Z."/>
            <person name="Siqueira W.J."/>
            <person name="de Souza A.A."/>
            <person name="de Souza A.P."/>
            <person name="Terenzi M.F."/>
            <person name="Truffi D."/>
            <person name="Tsai S.M."/>
            <person name="Tsuhako M.H."/>
            <person name="Vallada H."/>
            <person name="Van Sluys M.A."/>
            <person name="Verjovski-Almeida S."/>
            <person name="Vettore A.L."/>
            <person name="Zago M.A."/>
            <person name="Zatz M."/>
            <person name="Meidanis J."/>
            <person name="Setubal J.C."/>
        </authorList>
    </citation>
    <scope>NUCLEOTIDE SEQUENCE [LARGE SCALE GENOMIC DNA]</scope>
    <source>
        <strain>9a5c</strain>
    </source>
</reference>
<proteinExistence type="inferred from homology"/>
<evidence type="ECO:0000255" key="1">
    <source>
        <dbReference type="HAMAP-Rule" id="MF_01805"/>
    </source>
</evidence>
<evidence type="ECO:0000305" key="2"/>